<gene>
    <name evidence="1" type="primary">rplW</name>
    <name type="ordered locus">BMEA_A1276</name>
</gene>
<dbReference type="EMBL" id="CP001488">
    <property type="protein sequence ID" value="ACO01007.1"/>
    <property type="molecule type" value="Genomic_DNA"/>
</dbReference>
<dbReference type="RefSeq" id="WP_004683926.1">
    <property type="nucleotide sequence ID" value="NC_012441.1"/>
</dbReference>
<dbReference type="SMR" id="C0RJJ9"/>
<dbReference type="KEGG" id="bmi:BMEA_A1276"/>
<dbReference type="HOGENOM" id="CLU_037562_3_1_5"/>
<dbReference type="Proteomes" id="UP000001748">
    <property type="component" value="Chromosome I"/>
</dbReference>
<dbReference type="GO" id="GO:1990904">
    <property type="term" value="C:ribonucleoprotein complex"/>
    <property type="evidence" value="ECO:0007669"/>
    <property type="project" value="UniProtKB-KW"/>
</dbReference>
<dbReference type="GO" id="GO:0005840">
    <property type="term" value="C:ribosome"/>
    <property type="evidence" value="ECO:0007669"/>
    <property type="project" value="UniProtKB-KW"/>
</dbReference>
<dbReference type="GO" id="GO:0019843">
    <property type="term" value="F:rRNA binding"/>
    <property type="evidence" value="ECO:0007669"/>
    <property type="project" value="UniProtKB-UniRule"/>
</dbReference>
<dbReference type="GO" id="GO:0003735">
    <property type="term" value="F:structural constituent of ribosome"/>
    <property type="evidence" value="ECO:0007669"/>
    <property type="project" value="InterPro"/>
</dbReference>
<dbReference type="GO" id="GO:0006412">
    <property type="term" value="P:translation"/>
    <property type="evidence" value="ECO:0007669"/>
    <property type="project" value="UniProtKB-UniRule"/>
</dbReference>
<dbReference type="FunFam" id="3.30.70.330:FF:000001">
    <property type="entry name" value="50S ribosomal protein L23"/>
    <property type="match status" value="1"/>
</dbReference>
<dbReference type="Gene3D" id="3.30.70.330">
    <property type="match status" value="1"/>
</dbReference>
<dbReference type="HAMAP" id="MF_01369_B">
    <property type="entry name" value="Ribosomal_uL23_B"/>
    <property type="match status" value="1"/>
</dbReference>
<dbReference type="InterPro" id="IPR012677">
    <property type="entry name" value="Nucleotide-bd_a/b_plait_sf"/>
</dbReference>
<dbReference type="InterPro" id="IPR013025">
    <property type="entry name" value="Ribosomal_uL23-like"/>
</dbReference>
<dbReference type="InterPro" id="IPR012678">
    <property type="entry name" value="Ribosomal_uL23/eL15/eS24_sf"/>
</dbReference>
<dbReference type="NCBIfam" id="NF004359">
    <property type="entry name" value="PRK05738.1-3"/>
    <property type="match status" value="1"/>
</dbReference>
<dbReference type="NCBIfam" id="NF004360">
    <property type="entry name" value="PRK05738.1-5"/>
    <property type="match status" value="1"/>
</dbReference>
<dbReference type="NCBIfam" id="NF004363">
    <property type="entry name" value="PRK05738.2-4"/>
    <property type="match status" value="1"/>
</dbReference>
<dbReference type="NCBIfam" id="NF004366">
    <property type="entry name" value="PRK05738.3-2"/>
    <property type="match status" value="1"/>
</dbReference>
<dbReference type="PANTHER" id="PTHR11620">
    <property type="entry name" value="60S RIBOSOMAL PROTEIN L23A"/>
    <property type="match status" value="1"/>
</dbReference>
<dbReference type="Pfam" id="PF00276">
    <property type="entry name" value="Ribosomal_L23"/>
    <property type="match status" value="1"/>
</dbReference>
<dbReference type="SUPFAM" id="SSF54189">
    <property type="entry name" value="Ribosomal proteins S24e, L23 and L15e"/>
    <property type="match status" value="1"/>
</dbReference>
<accession>C0RJJ9</accession>
<proteinExistence type="inferred from homology"/>
<keyword id="KW-0687">Ribonucleoprotein</keyword>
<keyword id="KW-0689">Ribosomal protein</keyword>
<keyword id="KW-0694">RNA-binding</keyword>
<keyword id="KW-0699">rRNA-binding</keyword>
<comment type="function">
    <text evidence="1">One of the early assembly proteins it binds 23S rRNA. One of the proteins that surrounds the polypeptide exit tunnel on the outside of the ribosome. Forms the main docking site for trigger factor binding to the ribosome.</text>
</comment>
<comment type="subunit">
    <text evidence="1">Part of the 50S ribosomal subunit. Contacts protein L29, and trigger factor when it is bound to the ribosome.</text>
</comment>
<comment type="similarity">
    <text evidence="1">Belongs to the universal ribosomal protein uL23 family.</text>
</comment>
<reference key="1">
    <citation type="submission" date="2009-03" db="EMBL/GenBank/DDBJ databases">
        <title>Brucella melitensis ATCC 23457 whole genome shotgun sequencing project.</title>
        <authorList>
            <person name="Setubal J.C."/>
            <person name="Boyle S."/>
            <person name="Crasta O.R."/>
            <person name="Gillespie J.J."/>
            <person name="Kenyon R.W."/>
            <person name="Lu J."/>
            <person name="Mane S."/>
            <person name="Nagrani S."/>
            <person name="Shallom J.M."/>
            <person name="Shallom S."/>
            <person name="Shukla M."/>
            <person name="Snyder E.E."/>
            <person name="Sobral B.W."/>
            <person name="Wattam A.R."/>
            <person name="Will R."/>
            <person name="Williams K."/>
            <person name="Yoo H."/>
            <person name="Munk C."/>
            <person name="Tapia R."/>
            <person name="Han C."/>
            <person name="Detter J.C."/>
            <person name="Bruce D."/>
            <person name="Brettin T.S."/>
        </authorList>
    </citation>
    <scope>NUCLEOTIDE SEQUENCE [LARGE SCALE GENOMIC DNA]</scope>
    <source>
        <strain>ATCC 23457</strain>
    </source>
</reference>
<name>RL23_BRUMB</name>
<protein>
    <recommendedName>
        <fullName evidence="1">Large ribosomal subunit protein uL23</fullName>
    </recommendedName>
    <alternativeName>
        <fullName evidence="2">50S ribosomal protein L23</fullName>
    </alternativeName>
</protein>
<evidence type="ECO:0000255" key="1">
    <source>
        <dbReference type="HAMAP-Rule" id="MF_01369"/>
    </source>
</evidence>
<evidence type="ECO:0000305" key="2"/>
<organism>
    <name type="scientific">Brucella melitensis biotype 2 (strain ATCC 23457)</name>
    <dbReference type="NCBI Taxonomy" id="546272"/>
    <lineage>
        <taxon>Bacteria</taxon>
        <taxon>Pseudomonadati</taxon>
        <taxon>Pseudomonadota</taxon>
        <taxon>Alphaproteobacteria</taxon>
        <taxon>Hyphomicrobiales</taxon>
        <taxon>Brucellaceae</taxon>
        <taxon>Brucella/Ochrobactrum group</taxon>
        <taxon>Brucella</taxon>
    </lineage>
</organism>
<sequence length="97" mass="10482">MTDLRHYDVIVSPVITEKSTMVSEHNQVVFNVARKATKPEIKAAVEALFGVKVTAVNTAVCKGKVKRFRGLVGRQSDVKKAIVTLAEGQSIDVSTGL</sequence>
<feature type="chain" id="PRO_1000184069" description="Large ribosomal subunit protein uL23">
    <location>
        <begin position="1"/>
        <end position="97"/>
    </location>
</feature>